<sequence>MAKEDVIEIEGKVVETMPNAMFTVELENGHQILATVSGKIRKNYIRILVGDRVTVEMSPYDLTRGRITYRFK</sequence>
<organism>
    <name type="scientific">Streptococcus pyogenes serotype M6 (strain ATCC BAA-946 / MGAS10394)</name>
    <dbReference type="NCBI Taxonomy" id="286636"/>
    <lineage>
        <taxon>Bacteria</taxon>
        <taxon>Bacillati</taxon>
        <taxon>Bacillota</taxon>
        <taxon>Bacilli</taxon>
        <taxon>Lactobacillales</taxon>
        <taxon>Streptococcaceae</taxon>
        <taxon>Streptococcus</taxon>
    </lineage>
</organism>
<protein>
    <recommendedName>
        <fullName evidence="1">Translation initiation factor IF-1</fullName>
    </recommendedName>
</protein>
<name>IF1_STRP6</name>
<comment type="function">
    <text evidence="1">One of the essential components for the initiation of protein synthesis. Stabilizes the binding of IF-2 and IF-3 on the 30S subunit to which N-formylmethionyl-tRNA(fMet) subsequently binds. Helps modulate mRNA selection, yielding the 30S pre-initiation complex (PIC). Upon addition of the 50S ribosomal subunit IF-1, IF-2 and IF-3 are released leaving the mature 70S translation initiation complex.</text>
</comment>
<comment type="subunit">
    <text evidence="1">Component of the 30S ribosomal translation pre-initiation complex which assembles on the 30S ribosome in the order IF-2 and IF-3, IF-1 and N-formylmethionyl-tRNA(fMet); mRNA recruitment can occur at any time during PIC assembly.</text>
</comment>
<comment type="subcellular location">
    <subcellularLocation>
        <location evidence="1">Cytoplasm</location>
    </subcellularLocation>
</comment>
<comment type="similarity">
    <text evidence="1">Belongs to the IF-1 family.</text>
</comment>
<comment type="sequence caution" evidence="2">
    <conflict type="frameshift">
        <sequence resource="EMBL-CDS" id="AAT86250"/>
    </conflict>
</comment>
<keyword id="KW-0963">Cytoplasm</keyword>
<keyword id="KW-0396">Initiation factor</keyword>
<keyword id="KW-0648">Protein biosynthesis</keyword>
<keyword id="KW-0694">RNA-binding</keyword>
<keyword id="KW-0699">rRNA-binding</keyword>
<gene>
    <name evidence="1" type="primary">infA</name>
    <name type="ordered locus">M6_Spy0115</name>
</gene>
<evidence type="ECO:0000255" key="1">
    <source>
        <dbReference type="HAMAP-Rule" id="MF_00075"/>
    </source>
</evidence>
<evidence type="ECO:0000305" key="2"/>
<accession>Q5XEB3</accession>
<reference key="1">
    <citation type="journal article" date="2004" name="J. Infect. Dis.">
        <title>Progress toward characterization of the group A Streptococcus metagenome: complete genome sequence of a macrolide-resistant serotype M6 strain.</title>
        <authorList>
            <person name="Banks D.J."/>
            <person name="Porcella S.F."/>
            <person name="Barbian K.D."/>
            <person name="Beres S.B."/>
            <person name="Philips L.E."/>
            <person name="Voyich J.M."/>
            <person name="DeLeo F.R."/>
            <person name="Martin J.M."/>
            <person name="Somerville G.A."/>
            <person name="Musser J.M."/>
        </authorList>
    </citation>
    <scope>NUCLEOTIDE SEQUENCE [LARGE SCALE GENOMIC DNA]</scope>
    <source>
        <strain>ATCC BAA-946 / MGAS10394</strain>
    </source>
</reference>
<feature type="chain" id="PRO_0000095883" description="Translation initiation factor IF-1">
    <location>
        <begin position="1"/>
        <end position="72"/>
    </location>
</feature>
<feature type="domain" description="S1-like" evidence="1">
    <location>
        <begin position="1"/>
        <end position="72"/>
    </location>
</feature>
<dbReference type="EMBL" id="CP000003">
    <property type="protein sequence ID" value="AAT86250.1"/>
    <property type="status" value="ALT_FRAME"/>
    <property type="molecule type" value="Genomic_DNA"/>
</dbReference>
<dbReference type="SMR" id="Q5XEB3"/>
<dbReference type="KEGG" id="spa:M6_Spy0115"/>
<dbReference type="HOGENOM" id="CLU_218172_0_0_9"/>
<dbReference type="Proteomes" id="UP000001167">
    <property type="component" value="Chromosome"/>
</dbReference>
<dbReference type="GO" id="GO:0005829">
    <property type="term" value="C:cytosol"/>
    <property type="evidence" value="ECO:0007669"/>
    <property type="project" value="TreeGrafter"/>
</dbReference>
<dbReference type="GO" id="GO:0043022">
    <property type="term" value="F:ribosome binding"/>
    <property type="evidence" value="ECO:0007669"/>
    <property type="project" value="UniProtKB-UniRule"/>
</dbReference>
<dbReference type="GO" id="GO:0019843">
    <property type="term" value="F:rRNA binding"/>
    <property type="evidence" value="ECO:0007669"/>
    <property type="project" value="UniProtKB-UniRule"/>
</dbReference>
<dbReference type="GO" id="GO:0003743">
    <property type="term" value="F:translation initiation factor activity"/>
    <property type="evidence" value="ECO:0007669"/>
    <property type="project" value="UniProtKB-UniRule"/>
</dbReference>
<dbReference type="CDD" id="cd04451">
    <property type="entry name" value="S1_IF1"/>
    <property type="match status" value="1"/>
</dbReference>
<dbReference type="FunFam" id="2.40.50.140:FF:000002">
    <property type="entry name" value="Translation initiation factor IF-1"/>
    <property type="match status" value="1"/>
</dbReference>
<dbReference type="Gene3D" id="2.40.50.140">
    <property type="entry name" value="Nucleic acid-binding proteins"/>
    <property type="match status" value="1"/>
</dbReference>
<dbReference type="HAMAP" id="MF_00075">
    <property type="entry name" value="IF_1"/>
    <property type="match status" value="1"/>
</dbReference>
<dbReference type="InterPro" id="IPR012340">
    <property type="entry name" value="NA-bd_OB-fold"/>
</dbReference>
<dbReference type="InterPro" id="IPR006196">
    <property type="entry name" value="RNA-binding_domain_S1_IF1"/>
</dbReference>
<dbReference type="InterPro" id="IPR003029">
    <property type="entry name" value="S1_domain"/>
</dbReference>
<dbReference type="InterPro" id="IPR004368">
    <property type="entry name" value="TIF_IF1"/>
</dbReference>
<dbReference type="NCBIfam" id="TIGR00008">
    <property type="entry name" value="infA"/>
    <property type="match status" value="1"/>
</dbReference>
<dbReference type="PANTHER" id="PTHR33370">
    <property type="entry name" value="TRANSLATION INITIATION FACTOR IF-1, CHLOROPLASTIC"/>
    <property type="match status" value="1"/>
</dbReference>
<dbReference type="PANTHER" id="PTHR33370:SF1">
    <property type="entry name" value="TRANSLATION INITIATION FACTOR IF-1, CHLOROPLASTIC"/>
    <property type="match status" value="1"/>
</dbReference>
<dbReference type="Pfam" id="PF01176">
    <property type="entry name" value="eIF-1a"/>
    <property type="match status" value="1"/>
</dbReference>
<dbReference type="SMART" id="SM00316">
    <property type="entry name" value="S1"/>
    <property type="match status" value="1"/>
</dbReference>
<dbReference type="SUPFAM" id="SSF50249">
    <property type="entry name" value="Nucleic acid-binding proteins"/>
    <property type="match status" value="1"/>
</dbReference>
<dbReference type="PROSITE" id="PS50832">
    <property type="entry name" value="S1_IF1_TYPE"/>
    <property type="match status" value="1"/>
</dbReference>
<proteinExistence type="inferred from homology"/>